<name>PP2C4_PARTE</name>
<keyword id="KW-0378">Hydrolase</keyword>
<keyword id="KW-0460">Magnesium</keyword>
<keyword id="KW-0464">Manganese</keyword>
<keyword id="KW-0472">Membrane</keyword>
<keyword id="KW-0479">Metal-binding</keyword>
<keyword id="KW-0904">Protein phosphatase</keyword>
<keyword id="KW-1185">Reference proteome</keyword>
<evidence type="ECO:0000250" key="1"/>
<evidence type="ECO:0000255" key="2">
    <source>
        <dbReference type="PROSITE-ProRule" id="PRU01082"/>
    </source>
</evidence>
<evidence type="ECO:0000256" key="3">
    <source>
        <dbReference type="SAM" id="MobiDB-lite"/>
    </source>
</evidence>
<evidence type="ECO:0000305" key="4"/>
<sequence>MGPYLSQPNKNKTTTSGEGKSIIFAASEMQGWRNTMEDAHIHVCDLQQDLSIFGVFDGHGGKEVAQFVEKHFIEELQKNKNFKDQKFEDALRETFLKMDELLLTPEGQKEIIQIKGGDDEASYAGCTANVALFHKNVLYVANAGDSRSVLCRNNTNYDMSVDHKPDNYEEKSRIERAGGFVSDGRVNGNLNLSRALGDLEYKRDSKLRSNEQLIIALPDIKKVELNQTDKFLLMGCDGVFETLDHQDLLKFINQKLGNQQITPQLLGRVAEDLLDNLIAPDTSAGTGCDNMTTLIIYLKGK</sequence>
<protein>
    <recommendedName>
        <fullName>Probable protein phosphatase 2C 4</fullName>
        <shortName>PP2C 4</shortName>
        <ecNumber>3.1.3.16</ecNumber>
    </recommendedName>
</protein>
<dbReference type="EC" id="3.1.3.16"/>
<dbReference type="EMBL" id="CT868574">
    <property type="protein sequence ID" value="CAK86498.1"/>
    <property type="molecule type" value="Genomic_DNA"/>
</dbReference>
<dbReference type="RefSeq" id="XP_001453895.1">
    <property type="nucleotide sequence ID" value="XM_001453858.2"/>
</dbReference>
<dbReference type="SMR" id="A0DTY1"/>
<dbReference type="FunCoup" id="A0DTY1">
    <property type="interactions" value="1470"/>
</dbReference>
<dbReference type="STRING" id="5888.A0DTY1"/>
<dbReference type="EnsemblProtists" id="CAK86498">
    <property type="protein sequence ID" value="CAK86498"/>
    <property type="gene ID" value="GSPATT00020181001"/>
</dbReference>
<dbReference type="GeneID" id="5039680"/>
<dbReference type="KEGG" id="ptm:GSPATT00020181001"/>
<dbReference type="eggNOG" id="KOG0698">
    <property type="taxonomic scope" value="Eukaryota"/>
</dbReference>
<dbReference type="HOGENOM" id="CLU_013173_4_1_1"/>
<dbReference type="InParanoid" id="A0DTY1"/>
<dbReference type="OMA" id="MQGYRMT"/>
<dbReference type="OrthoDB" id="10264738at2759"/>
<dbReference type="Proteomes" id="UP000000600">
    <property type="component" value="Partially assembled WGS sequence"/>
</dbReference>
<dbReference type="GO" id="GO:0016020">
    <property type="term" value="C:membrane"/>
    <property type="evidence" value="ECO:0007669"/>
    <property type="project" value="UniProtKB-SubCell"/>
</dbReference>
<dbReference type="GO" id="GO:0046872">
    <property type="term" value="F:metal ion binding"/>
    <property type="evidence" value="ECO:0007669"/>
    <property type="project" value="UniProtKB-KW"/>
</dbReference>
<dbReference type="GO" id="GO:0004722">
    <property type="term" value="F:protein serine/threonine phosphatase activity"/>
    <property type="evidence" value="ECO:0007669"/>
    <property type="project" value="UniProtKB-EC"/>
</dbReference>
<dbReference type="GO" id="GO:0007165">
    <property type="term" value="P:signal transduction"/>
    <property type="evidence" value="ECO:0000318"/>
    <property type="project" value="GO_Central"/>
</dbReference>
<dbReference type="CDD" id="cd00143">
    <property type="entry name" value="PP2Cc"/>
    <property type="match status" value="1"/>
</dbReference>
<dbReference type="FunFam" id="3.60.40.10:FF:000064">
    <property type="entry name" value="Protein phosphatase 2C 1"/>
    <property type="match status" value="1"/>
</dbReference>
<dbReference type="Gene3D" id="3.60.40.10">
    <property type="entry name" value="PPM-type phosphatase domain"/>
    <property type="match status" value="1"/>
</dbReference>
<dbReference type="InterPro" id="IPR015655">
    <property type="entry name" value="PP2C"/>
</dbReference>
<dbReference type="InterPro" id="IPR000222">
    <property type="entry name" value="PP2C_BS"/>
</dbReference>
<dbReference type="InterPro" id="IPR036457">
    <property type="entry name" value="PPM-type-like_dom_sf"/>
</dbReference>
<dbReference type="InterPro" id="IPR001932">
    <property type="entry name" value="PPM-type_phosphatase-like_dom"/>
</dbReference>
<dbReference type="PANTHER" id="PTHR13832:SF803">
    <property type="entry name" value="PROTEIN PHOSPHATASE 1G"/>
    <property type="match status" value="1"/>
</dbReference>
<dbReference type="PANTHER" id="PTHR13832">
    <property type="entry name" value="PROTEIN PHOSPHATASE 2C"/>
    <property type="match status" value="1"/>
</dbReference>
<dbReference type="Pfam" id="PF00481">
    <property type="entry name" value="PP2C"/>
    <property type="match status" value="1"/>
</dbReference>
<dbReference type="SMART" id="SM00332">
    <property type="entry name" value="PP2Cc"/>
    <property type="match status" value="1"/>
</dbReference>
<dbReference type="SUPFAM" id="SSF81606">
    <property type="entry name" value="PP2C-like"/>
    <property type="match status" value="1"/>
</dbReference>
<dbReference type="PROSITE" id="PS01032">
    <property type="entry name" value="PPM_1"/>
    <property type="match status" value="1"/>
</dbReference>
<dbReference type="PROSITE" id="PS51746">
    <property type="entry name" value="PPM_2"/>
    <property type="match status" value="1"/>
</dbReference>
<proteinExistence type="inferred from homology"/>
<reference key="1">
    <citation type="journal article" date="2006" name="Nature">
        <title>Global trends of whole-genome duplications revealed by the ciliate Paramecium tetraurelia.</title>
        <authorList>
            <person name="Aury J.-M."/>
            <person name="Jaillon O."/>
            <person name="Duret L."/>
            <person name="Noel B."/>
            <person name="Jubin C."/>
            <person name="Porcel B.M."/>
            <person name="Segurens B."/>
            <person name="Daubin V."/>
            <person name="Anthouard V."/>
            <person name="Aiach N."/>
            <person name="Arnaiz O."/>
            <person name="Billaut A."/>
            <person name="Beisson J."/>
            <person name="Blanc I."/>
            <person name="Bouhouche K."/>
            <person name="Camara F."/>
            <person name="Duharcourt S."/>
            <person name="Guigo R."/>
            <person name="Gogendeau D."/>
            <person name="Katinka M."/>
            <person name="Keller A.-M."/>
            <person name="Kissmehl R."/>
            <person name="Klotz C."/>
            <person name="Koll F."/>
            <person name="Le Mouel A."/>
            <person name="Lepere G."/>
            <person name="Malinsky S."/>
            <person name="Nowacki M."/>
            <person name="Nowak J.K."/>
            <person name="Plattner H."/>
            <person name="Poulain J."/>
            <person name="Ruiz F."/>
            <person name="Serrano V."/>
            <person name="Zagulski M."/>
            <person name="Dessen P."/>
            <person name="Betermier M."/>
            <person name="Weissenbach J."/>
            <person name="Scarpelli C."/>
            <person name="Schaechter V."/>
            <person name="Sperling L."/>
            <person name="Meyer E."/>
            <person name="Cohen J."/>
            <person name="Wincker P."/>
        </authorList>
    </citation>
    <scope>NUCLEOTIDE SEQUENCE [LARGE SCALE GENOMIC DNA]</scope>
    <source>
        <strain>Stock d4-2</strain>
    </source>
</reference>
<feature type="chain" id="PRO_0000307831" description="Probable protein phosphatase 2C 4">
    <location>
        <begin position="1"/>
        <end position="301"/>
    </location>
</feature>
<feature type="domain" description="PPM-type phosphatase" evidence="2">
    <location>
        <begin position="23"/>
        <end position="298"/>
    </location>
</feature>
<feature type="region of interest" description="Disordered" evidence="3">
    <location>
        <begin position="1"/>
        <end position="20"/>
    </location>
</feature>
<feature type="compositionally biased region" description="Polar residues" evidence="3">
    <location>
        <begin position="1"/>
        <end position="18"/>
    </location>
</feature>
<feature type="binding site" evidence="1">
    <location>
        <position position="57"/>
    </location>
    <ligand>
        <name>Mn(2+)</name>
        <dbReference type="ChEBI" id="CHEBI:29035"/>
        <label>1</label>
    </ligand>
</feature>
<feature type="binding site" evidence="1">
    <location>
        <position position="57"/>
    </location>
    <ligand>
        <name>Mn(2+)</name>
        <dbReference type="ChEBI" id="CHEBI:29035"/>
        <label>2</label>
    </ligand>
</feature>
<feature type="binding site" evidence="1">
    <location>
        <position position="58"/>
    </location>
    <ligand>
        <name>Mn(2+)</name>
        <dbReference type="ChEBI" id="CHEBI:29035"/>
        <label>1</label>
    </ligand>
</feature>
<feature type="binding site" evidence="1">
    <location>
        <position position="237"/>
    </location>
    <ligand>
        <name>Mn(2+)</name>
        <dbReference type="ChEBI" id="CHEBI:29035"/>
        <label>2</label>
    </ligand>
</feature>
<feature type="binding site" evidence="1">
    <location>
        <position position="289"/>
    </location>
    <ligand>
        <name>Mn(2+)</name>
        <dbReference type="ChEBI" id="CHEBI:29035"/>
        <label>2</label>
    </ligand>
</feature>
<gene>
    <name type="ORF">GSPATT00020181001</name>
</gene>
<accession>A0DTY1</accession>
<organism>
    <name type="scientific">Paramecium tetraurelia</name>
    <dbReference type="NCBI Taxonomy" id="5888"/>
    <lineage>
        <taxon>Eukaryota</taxon>
        <taxon>Sar</taxon>
        <taxon>Alveolata</taxon>
        <taxon>Ciliophora</taxon>
        <taxon>Intramacronucleata</taxon>
        <taxon>Oligohymenophorea</taxon>
        <taxon>Peniculida</taxon>
        <taxon>Parameciidae</taxon>
        <taxon>Paramecium</taxon>
    </lineage>
</organism>
<comment type="function">
    <text evidence="1">Enzyme with a broad specificity.</text>
</comment>
<comment type="catalytic activity">
    <reaction>
        <text>O-phospho-L-seryl-[protein] + H2O = L-seryl-[protein] + phosphate</text>
        <dbReference type="Rhea" id="RHEA:20629"/>
        <dbReference type="Rhea" id="RHEA-COMP:9863"/>
        <dbReference type="Rhea" id="RHEA-COMP:11604"/>
        <dbReference type="ChEBI" id="CHEBI:15377"/>
        <dbReference type="ChEBI" id="CHEBI:29999"/>
        <dbReference type="ChEBI" id="CHEBI:43474"/>
        <dbReference type="ChEBI" id="CHEBI:83421"/>
        <dbReference type="EC" id="3.1.3.16"/>
    </reaction>
</comment>
<comment type="catalytic activity">
    <reaction>
        <text>O-phospho-L-threonyl-[protein] + H2O = L-threonyl-[protein] + phosphate</text>
        <dbReference type="Rhea" id="RHEA:47004"/>
        <dbReference type="Rhea" id="RHEA-COMP:11060"/>
        <dbReference type="Rhea" id="RHEA-COMP:11605"/>
        <dbReference type="ChEBI" id="CHEBI:15377"/>
        <dbReference type="ChEBI" id="CHEBI:30013"/>
        <dbReference type="ChEBI" id="CHEBI:43474"/>
        <dbReference type="ChEBI" id="CHEBI:61977"/>
        <dbReference type="EC" id="3.1.3.16"/>
    </reaction>
</comment>
<comment type="cofactor">
    <cofactor evidence="1">
        <name>Mg(2+)</name>
        <dbReference type="ChEBI" id="CHEBI:18420"/>
    </cofactor>
    <cofactor evidence="1">
        <name>Mn(2+)</name>
        <dbReference type="ChEBI" id="CHEBI:29035"/>
    </cofactor>
    <text evidence="1">Binds 2 magnesium or manganese ions per subunit.</text>
</comment>
<comment type="subcellular location">
    <subcellularLocation>
        <location evidence="1">Membrane</location>
        <topology evidence="1">Peripheral membrane protein</topology>
    </subcellularLocation>
</comment>
<comment type="similarity">
    <text evidence="4">Belongs to the PP2C family.</text>
</comment>